<proteinExistence type="evidence at protein level"/>
<dbReference type="EMBL" id="EU980096">
    <property type="protein sequence ID" value="ACJ66733.1"/>
    <property type="molecule type" value="Genomic_DNA"/>
</dbReference>
<dbReference type="EMBL" id="AC000106">
    <property type="protein sequence ID" value="AAB70397.1"/>
    <property type="status" value="ALT_INIT"/>
    <property type="molecule type" value="Genomic_DNA"/>
</dbReference>
<dbReference type="EMBL" id="CP002684">
    <property type="protein sequence ID" value="AEE28396.1"/>
    <property type="molecule type" value="Genomic_DNA"/>
</dbReference>
<dbReference type="EMBL" id="AY050423">
    <property type="protein sequence ID" value="AAK91439.1"/>
    <property type="molecule type" value="mRNA"/>
</dbReference>
<dbReference type="EMBL" id="AF412095">
    <property type="protein sequence ID" value="AAL06548.1"/>
    <property type="molecule type" value="mRNA"/>
</dbReference>
<dbReference type="EMBL" id="AY124813">
    <property type="protein sequence ID" value="AAM70522.1"/>
    <property type="molecule type" value="mRNA"/>
</dbReference>
<dbReference type="PIR" id="C86223">
    <property type="entry name" value="C86223"/>
</dbReference>
<dbReference type="RefSeq" id="NP_172384.1">
    <property type="nucleotide sequence ID" value="NM_100781.5"/>
</dbReference>
<dbReference type="SMR" id="O04019"/>
<dbReference type="BioGRID" id="22672">
    <property type="interactions" value="91"/>
</dbReference>
<dbReference type="FunCoup" id="O04019">
    <property type="interactions" value="3976"/>
</dbReference>
<dbReference type="IntAct" id="O04019">
    <property type="interactions" value="6"/>
</dbReference>
<dbReference type="STRING" id="3702.O04019"/>
<dbReference type="MoonProt" id="O04019"/>
<dbReference type="iPTMnet" id="O04019"/>
<dbReference type="MetOSite" id="O04019"/>
<dbReference type="PaxDb" id="3702-AT1G09100.1"/>
<dbReference type="ProteomicsDB" id="226343"/>
<dbReference type="EnsemblPlants" id="AT1G09100.1">
    <property type="protein sequence ID" value="AT1G09100.1"/>
    <property type="gene ID" value="AT1G09100"/>
</dbReference>
<dbReference type="GeneID" id="837431"/>
<dbReference type="Gramene" id="AT1G09100.1">
    <property type="protein sequence ID" value="AT1G09100.1"/>
    <property type="gene ID" value="AT1G09100"/>
</dbReference>
<dbReference type="KEGG" id="ath:AT1G09100"/>
<dbReference type="Araport" id="AT1G09100"/>
<dbReference type="TAIR" id="AT1G09100">
    <property type="gene designation" value="RPT5B"/>
</dbReference>
<dbReference type="eggNOG" id="KOG0652">
    <property type="taxonomic scope" value="Eukaryota"/>
</dbReference>
<dbReference type="HOGENOM" id="CLU_000688_2_4_1"/>
<dbReference type="InParanoid" id="O04019"/>
<dbReference type="OMA" id="THEDCME"/>
<dbReference type="OrthoDB" id="1054102at2759"/>
<dbReference type="PhylomeDB" id="O04019"/>
<dbReference type="CD-CODE" id="4299E36E">
    <property type="entry name" value="Nucleolus"/>
</dbReference>
<dbReference type="PRO" id="PR:O04019"/>
<dbReference type="Proteomes" id="UP000006548">
    <property type="component" value="Chromosome 1"/>
</dbReference>
<dbReference type="ExpressionAtlas" id="O04019">
    <property type="expression patterns" value="baseline and differential"/>
</dbReference>
<dbReference type="GO" id="GO:0005829">
    <property type="term" value="C:cytosol"/>
    <property type="evidence" value="ECO:0007005"/>
    <property type="project" value="TAIR"/>
</dbReference>
<dbReference type="GO" id="GO:0005576">
    <property type="term" value="C:extracellular region"/>
    <property type="evidence" value="ECO:0007005"/>
    <property type="project" value="TAIR"/>
</dbReference>
<dbReference type="GO" id="GO:0005634">
    <property type="term" value="C:nucleus"/>
    <property type="evidence" value="ECO:0000314"/>
    <property type="project" value="CAFA"/>
</dbReference>
<dbReference type="GO" id="GO:0000502">
    <property type="term" value="C:proteasome complex"/>
    <property type="evidence" value="ECO:0000314"/>
    <property type="project" value="TAIR"/>
</dbReference>
<dbReference type="GO" id="GO:0032991">
    <property type="term" value="C:protein-containing complex"/>
    <property type="evidence" value="ECO:0000315"/>
    <property type="project" value="CAFA"/>
</dbReference>
<dbReference type="GO" id="GO:0005524">
    <property type="term" value="F:ATP binding"/>
    <property type="evidence" value="ECO:0007669"/>
    <property type="project" value="UniProtKB-KW"/>
</dbReference>
<dbReference type="GO" id="GO:0016887">
    <property type="term" value="F:ATP hydrolysis activity"/>
    <property type="evidence" value="ECO:0007669"/>
    <property type="project" value="InterPro"/>
</dbReference>
<dbReference type="GO" id="GO:0009553">
    <property type="term" value="P:embryo sac development"/>
    <property type="evidence" value="ECO:0000316"/>
    <property type="project" value="TAIR"/>
</dbReference>
<dbReference type="GO" id="GO:0010255">
    <property type="term" value="P:glucose mediated signaling pathway"/>
    <property type="evidence" value="ECO:0000315"/>
    <property type="project" value="TAIR"/>
</dbReference>
<dbReference type="GO" id="GO:0009555">
    <property type="term" value="P:pollen development"/>
    <property type="evidence" value="ECO:0000316"/>
    <property type="project" value="TAIR"/>
</dbReference>
<dbReference type="GO" id="GO:0010498">
    <property type="term" value="P:proteasomal protein catabolic process"/>
    <property type="evidence" value="ECO:0000316"/>
    <property type="project" value="TAIR"/>
</dbReference>
<dbReference type="GO" id="GO:0006357">
    <property type="term" value="P:regulation of transcription by RNA polymerase II"/>
    <property type="evidence" value="ECO:0000315"/>
    <property type="project" value="CAFA"/>
</dbReference>
<dbReference type="FunFam" id="1.10.8.60:FF:000009">
    <property type="entry name" value="26S protease regulatory subunit 6A"/>
    <property type="match status" value="1"/>
</dbReference>
<dbReference type="FunFam" id="2.40.50.140:FF:000076">
    <property type="entry name" value="26S protease regulatory subunit 6A"/>
    <property type="match status" value="1"/>
</dbReference>
<dbReference type="FunFam" id="3.40.50.300:FF:000037">
    <property type="entry name" value="26S protease regulatory subunit 6A"/>
    <property type="match status" value="1"/>
</dbReference>
<dbReference type="Gene3D" id="1.10.8.60">
    <property type="match status" value="1"/>
</dbReference>
<dbReference type="Gene3D" id="2.40.50.140">
    <property type="entry name" value="Nucleic acid-binding proteins"/>
    <property type="match status" value="1"/>
</dbReference>
<dbReference type="Gene3D" id="3.40.50.300">
    <property type="entry name" value="P-loop containing nucleotide triphosphate hydrolases"/>
    <property type="match status" value="1"/>
</dbReference>
<dbReference type="InterPro" id="IPR050221">
    <property type="entry name" value="26S_Proteasome_ATPase"/>
</dbReference>
<dbReference type="InterPro" id="IPR003593">
    <property type="entry name" value="AAA+_ATPase"/>
</dbReference>
<dbReference type="InterPro" id="IPR041569">
    <property type="entry name" value="AAA_lid_3"/>
</dbReference>
<dbReference type="InterPro" id="IPR003959">
    <property type="entry name" value="ATPase_AAA_core"/>
</dbReference>
<dbReference type="InterPro" id="IPR003960">
    <property type="entry name" value="ATPase_AAA_CS"/>
</dbReference>
<dbReference type="InterPro" id="IPR012340">
    <property type="entry name" value="NA-bd_OB-fold"/>
</dbReference>
<dbReference type="InterPro" id="IPR027417">
    <property type="entry name" value="P-loop_NTPase"/>
</dbReference>
<dbReference type="InterPro" id="IPR032501">
    <property type="entry name" value="Prot_ATP_ID_OB_2nd"/>
</dbReference>
<dbReference type="PANTHER" id="PTHR23073">
    <property type="entry name" value="26S PROTEASOME REGULATORY SUBUNIT"/>
    <property type="match status" value="1"/>
</dbReference>
<dbReference type="Pfam" id="PF00004">
    <property type="entry name" value="AAA"/>
    <property type="match status" value="1"/>
</dbReference>
<dbReference type="Pfam" id="PF17862">
    <property type="entry name" value="AAA_lid_3"/>
    <property type="match status" value="1"/>
</dbReference>
<dbReference type="Pfam" id="PF16450">
    <property type="entry name" value="Prot_ATP_ID_OB_C"/>
    <property type="match status" value="1"/>
</dbReference>
<dbReference type="SMART" id="SM00382">
    <property type="entry name" value="AAA"/>
    <property type="match status" value="1"/>
</dbReference>
<dbReference type="SUPFAM" id="SSF52540">
    <property type="entry name" value="P-loop containing nucleoside triphosphate hydrolases"/>
    <property type="match status" value="1"/>
</dbReference>
<dbReference type="PROSITE" id="PS00674">
    <property type="entry name" value="AAA"/>
    <property type="match status" value="1"/>
</dbReference>
<feature type="chain" id="PRO_0000084703" description="26S proteasome regulatory subunit 6A homolog B">
    <location>
        <begin position="1"/>
        <end position="423"/>
    </location>
</feature>
<feature type="binding site" evidence="5">
    <location>
        <begin position="211"/>
        <end position="218"/>
    </location>
    <ligand>
        <name>ATP</name>
        <dbReference type="ChEBI" id="CHEBI:30616"/>
    </ligand>
</feature>
<feature type="modified residue" description="Phosphoserine" evidence="4">
    <location>
        <position position="18"/>
    </location>
</feature>
<feature type="cross-link" description="Glycyl lysine isopeptide (Lys-Gly) (interchain with G-Cter in ubiquitin)" evidence="3">
    <location>
        <position position="234"/>
    </location>
</feature>
<feature type="cross-link" description="Glycyl lysine isopeptide (Lys-Gly) (interchain with G-Cter in ubiquitin)" evidence="2">
    <location>
        <position position="278"/>
    </location>
</feature>
<feature type="cross-link" description="Glycyl lysine isopeptide (Lys-Gly) (interchain with G-Cter in ubiquitin)" evidence="2">
    <location>
        <position position="415"/>
    </location>
</feature>
<keyword id="KW-0067">ATP-binding</keyword>
<keyword id="KW-0963">Cytoplasm</keyword>
<keyword id="KW-1017">Isopeptide bond</keyword>
<keyword id="KW-0547">Nucleotide-binding</keyword>
<keyword id="KW-0539">Nucleus</keyword>
<keyword id="KW-0597">Phosphoprotein</keyword>
<keyword id="KW-0647">Proteasome</keyword>
<keyword id="KW-1185">Reference proteome</keyword>
<keyword id="KW-0832">Ubl conjugation</keyword>
<sequence>MATAMAEDTSFEGDQLASMTTDDIGRASRLLANEIRILKEESQRTNLDLESVKEKIKENQEKIKLNKQLPYLVGNIVEILEMSPEDDAEEDGANIDLDSQRKGKCVVLKTSTRQTIFLPVVGLVDPDTLKPGDLVGVNKDSYLILDTLPSEYDSRVKAMEVDEKPTEDYNDIGGLEKQIQELVEAIVLPMTHKEQFEKLGIRPPKGVLLYGPPGTGKTLMARACAAQTNATFLKLAGPQLVQMFIGDGAKLVRDAFLLAKEKSPCIIFIDEIDAIGTKRFDSEVSGDREVQRTMLELLNQLDGFSSDDRIKVIAATNRADILDPALMRSGRLDRKIEFPHPTEEARGRILQIHSRKMNVNADVNFEELARSTDDFNGAQLKAVCVEAGMLALRRDATEVNHEDFNEGIIQVQAKKKASLNYYA</sequence>
<protein>
    <recommendedName>
        <fullName>26S proteasome regulatory subunit 6A homolog B</fullName>
    </recommendedName>
    <alternativeName>
        <fullName>26S proteasome AAA-ATPase subunit RPT5b</fullName>
    </alternativeName>
    <alternativeName>
        <fullName>Proteasome 26S subunit 6A homolog B</fullName>
    </alternativeName>
    <alternativeName>
        <fullName>Regulatory particle triple-A ATPase subunit 5b</fullName>
    </alternativeName>
    <alternativeName>
        <fullName>Tat-binding protein 1 homolog B</fullName>
        <shortName>TBP-1 homolog B</shortName>
    </alternativeName>
</protein>
<gene>
    <name type="primary">RPT5B</name>
    <name type="synonym">TBP1</name>
    <name type="ordered locus">At1g09100</name>
    <name type="ORF">F7G19.2</name>
</gene>
<organism>
    <name type="scientific">Arabidopsis thaliana</name>
    <name type="common">Mouse-ear cress</name>
    <dbReference type="NCBI Taxonomy" id="3702"/>
    <lineage>
        <taxon>Eukaryota</taxon>
        <taxon>Viridiplantae</taxon>
        <taxon>Streptophyta</taxon>
        <taxon>Embryophyta</taxon>
        <taxon>Tracheophyta</taxon>
        <taxon>Spermatophyta</taxon>
        <taxon>Magnoliopsida</taxon>
        <taxon>eudicotyledons</taxon>
        <taxon>Gunneridae</taxon>
        <taxon>Pentapetalae</taxon>
        <taxon>rosids</taxon>
        <taxon>malvids</taxon>
        <taxon>Brassicales</taxon>
        <taxon>Brassicaceae</taxon>
        <taxon>Camelineae</taxon>
        <taxon>Arabidopsis</taxon>
    </lineage>
</organism>
<name>PS6AB_ARATH</name>
<evidence type="ECO:0000250" key="1"/>
<evidence type="ECO:0000250" key="2">
    <source>
        <dbReference type="UniProtKB" id="Q9SEI2"/>
    </source>
</evidence>
<evidence type="ECO:0000250" key="3">
    <source>
        <dbReference type="UniProtKB" id="Q9SEI3"/>
    </source>
</evidence>
<evidence type="ECO:0000250" key="4">
    <source>
        <dbReference type="UniProtKB" id="Q9SEI4"/>
    </source>
</evidence>
<evidence type="ECO:0000255" key="5"/>
<evidence type="ECO:0000269" key="6">
    <source>
    </source>
</evidence>
<evidence type="ECO:0000269" key="7">
    <source>
    </source>
</evidence>
<evidence type="ECO:0000269" key="8">
    <source>
    </source>
</evidence>
<evidence type="ECO:0000305" key="9"/>
<accession>O04019</accession>
<accession>Q93V77</accession>
<reference key="1">
    <citation type="journal article" date="2009" name="Plant Cell">
        <title>The Arabidopsis proteasome RPT5 subunits are essential for gametophyte development and show accession-dependent redundancy.</title>
        <authorList>
            <person name="Gallois J.-L."/>
            <person name="Guyon-Debast A."/>
            <person name="Lecureuil A."/>
            <person name="Vezon D."/>
            <person name="Carpentier V."/>
            <person name="Bonhomme S."/>
            <person name="Guerche P."/>
        </authorList>
    </citation>
    <scope>NUCLEOTIDE SEQUENCE [GENOMIC DNA]</scope>
    <source>
        <strain>cv. Wassilewskija</strain>
    </source>
</reference>
<reference key="2">
    <citation type="journal article" date="2000" name="Nature">
        <title>Sequence and analysis of chromosome 1 of the plant Arabidopsis thaliana.</title>
        <authorList>
            <person name="Theologis A."/>
            <person name="Ecker J.R."/>
            <person name="Palm C.J."/>
            <person name="Federspiel N.A."/>
            <person name="Kaul S."/>
            <person name="White O."/>
            <person name="Alonso J."/>
            <person name="Altafi H."/>
            <person name="Araujo R."/>
            <person name="Bowman C.L."/>
            <person name="Brooks S.Y."/>
            <person name="Buehler E."/>
            <person name="Chan A."/>
            <person name="Chao Q."/>
            <person name="Chen H."/>
            <person name="Cheuk R.F."/>
            <person name="Chin C.W."/>
            <person name="Chung M.K."/>
            <person name="Conn L."/>
            <person name="Conway A.B."/>
            <person name="Conway A.R."/>
            <person name="Creasy T.H."/>
            <person name="Dewar K."/>
            <person name="Dunn P."/>
            <person name="Etgu P."/>
            <person name="Feldblyum T.V."/>
            <person name="Feng J.-D."/>
            <person name="Fong B."/>
            <person name="Fujii C.Y."/>
            <person name="Gill J.E."/>
            <person name="Goldsmith A.D."/>
            <person name="Haas B."/>
            <person name="Hansen N.F."/>
            <person name="Hughes B."/>
            <person name="Huizar L."/>
            <person name="Hunter J.L."/>
            <person name="Jenkins J."/>
            <person name="Johnson-Hopson C."/>
            <person name="Khan S."/>
            <person name="Khaykin E."/>
            <person name="Kim C.J."/>
            <person name="Koo H.L."/>
            <person name="Kremenetskaia I."/>
            <person name="Kurtz D.B."/>
            <person name="Kwan A."/>
            <person name="Lam B."/>
            <person name="Langin-Hooper S."/>
            <person name="Lee A."/>
            <person name="Lee J.M."/>
            <person name="Lenz C.A."/>
            <person name="Li J.H."/>
            <person name="Li Y.-P."/>
            <person name="Lin X."/>
            <person name="Liu S.X."/>
            <person name="Liu Z.A."/>
            <person name="Luros J.S."/>
            <person name="Maiti R."/>
            <person name="Marziali A."/>
            <person name="Militscher J."/>
            <person name="Miranda M."/>
            <person name="Nguyen M."/>
            <person name="Nierman W.C."/>
            <person name="Osborne B.I."/>
            <person name="Pai G."/>
            <person name="Peterson J."/>
            <person name="Pham P.K."/>
            <person name="Rizzo M."/>
            <person name="Rooney T."/>
            <person name="Rowley D."/>
            <person name="Sakano H."/>
            <person name="Salzberg S.L."/>
            <person name="Schwartz J.R."/>
            <person name="Shinn P."/>
            <person name="Southwick A.M."/>
            <person name="Sun H."/>
            <person name="Tallon L.J."/>
            <person name="Tambunga G."/>
            <person name="Toriumi M.J."/>
            <person name="Town C.D."/>
            <person name="Utterback T."/>
            <person name="Van Aken S."/>
            <person name="Vaysberg M."/>
            <person name="Vysotskaia V.S."/>
            <person name="Walker M."/>
            <person name="Wu D."/>
            <person name="Yu G."/>
            <person name="Fraser C.M."/>
            <person name="Venter J.C."/>
            <person name="Davis R.W."/>
        </authorList>
    </citation>
    <scope>NUCLEOTIDE SEQUENCE [LARGE SCALE GENOMIC DNA]</scope>
    <source>
        <strain>cv. Columbia</strain>
    </source>
</reference>
<reference key="3">
    <citation type="journal article" date="2017" name="Plant J.">
        <title>Araport11: a complete reannotation of the Arabidopsis thaliana reference genome.</title>
        <authorList>
            <person name="Cheng C.Y."/>
            <person name="Krishnakumar V."/>
            <person name="Chan A.P."/>
            <person name="Thibaud-Nissen F."/>
            <person name="Schobel S."/>
            <person name="Town C.D."/>
        </authorList>
    </citation>
    <scope>GENOME REANNOTATION</scope>
    <source>
        <strain>cv. Columbia</strain>
    </source>
</reference>
<reference key="4">
    <citation type="journal article" date="2003" name="Science">
        <title>Empirical analysis of transcriptional activity in the Arabidopsis genome.</title>
        <authorList>
            <person name="Yamada K."/>
            <person name="Lim J."/>
            <person name="Dale J.M."/>
            <person name="Chen H."/>
            <person name="Shinn P."/>
            <person name="Palm C.J."/>
            <person name="Southwick A.M."/>
            <person name="Wu H.C."/>
            <person name="Kim C.J."/>
            <person name="Nguyen M."/>
            <person name="Pham P.K."/>
            <person name="Cheuk R.F."/>
            <person name="Karlin-Newmann G."/>
            <person name="Liu S.X."/>
            <person name="Lam B."/>
            <person name="Sakano H."/>
            <person name="Wu T."/>
            <person name="Yu G."/>
            <person name="Miranda M."/>
            <person name="Quach H.L."/>
            <person name="Tripp M."/>
            <person name="Chang C.H."/>
            <person name="Lee J.M."/>
            <person name="Toriumi M.J."/>
            <person name="Chan M.M."/>
            <person name="Tang C.C."/>
            <person name="Onodera C.S."/>
            <person name="Deng J.M."/>
            <person name="Akiyama K."/>
            <person name="Ansari Y."/>
            <person name="Arakawa T."/>
            <person name="Banh J."/>
            <person name="Banno F."/>
            <person name="Bowser L."/>
            <person name="Brooks S.Y."/>
            <person name="Carninci P."/>
            <person name="Chao Q."/>
            <person name="Choy N."/>
            <person name="Enju A."/>
            <person name="Goldsmith A.D."/>
            <person name="Gurjal M."/>
            <person name="Hansen N.F."/>
            <person name="Hayashizaki Y."/>
            <person name="Johnson-Hopson C."/>
            <person name="Hsuan V.W."/>
            <person name="Iida K."/>
            <person name="Karnes M."/>
            <person name="Khan S."/>
            <person name="Koesema E."/>
            <person name="Ishida J."/>
            <person name="Jiang P.X."/>
            <person name="Jones T."/>
            <person name="Kawai J."/>
            <person name="Kamiya A."/>
            <person name="Meyers C."/>
            <person name="Nakajima M."/>
            <person name="Narusaka M."/>
            <person name="Seki M."/>
            <person name="Sakurai T."/>
            <person name="Satou M."/>
            <person name="Tamse R."/>
            <person name="Vaysberg M."/>
            <person name="Wallender E.K."/>
            <person name="Wong C."/>
            <person name="Yamamura Y."/>
            <person name="Yuan S."/>
            <person name="Shinozaki K."/>
            <person name="Davis R.W."/>
            <person name="Theologis A."/>
            <person name="Ecker J.R."/>
        </authorList>
    </citation>
    <scope>NUCLEOTIDE SEQUENCE [LARGE SCALE MRNA]</scope>
    <source>
        <strain>cv. Columbia</strain>
    </source>
</reference>
<reference key="5">
    <citation type="journal article" date="1999" name="Plant J.">
        <title>Structural and functional analysis of the six regulatory particle triple-A ATPase subunits from the Arabidopsis 26S proteasome.</title>
        <authorList>
            <person name="Fu H."/>
            <person name="Doelling J.H."/>
            <person name="Rubin D.M."/>
            <person name="Vierstra R.D."/>
        </authorList>
    </citation>
    <scope>GENE FAMILY</scope>
    <scope>NOMENCLATURE</scope>
</reference>
<reference key="6">
    <citation type="journal article" date="2004" name="J. Biol. Chem.">
        <title>Purification of the Arabidopsis 26 S proteasome: biochemical and molecular analyses revealed the presence of multiple isoforms.</title>
        <authorList>
            <person name="Yang P."/>
            <person name="Fu H."/>
            <person name="Walker J."/>
            <person name="Papa C.M."/>
            <person name="Smalle J."/>
            <person name="Ju Y.-M."/>
            <person name="Vierstra R.D."/>
        </authorList>
    </citation>
    <scope>SUBUNIT</scope>
    <scope>IDENTIFICATION BY MASS SPECTROMETRY</scope>
</reference>
<reference key="7">
    <citation type="journal article" date="2006" name="Cell">
        <title>Regulatory functions of nuclear hexokinase1 complex in glucose signaling.</title>
        <authorList>
            <person name="Cho Y.H."/>
            <person name="Yoo S.D."/>
            <person name="Sheen J."/>
        </authorList>
    </citation>
    <scope>INTERACTION WITH HXK1</scope>
    <scope>SUBCELLULAR LOCATION</scope>
    <scope>FUNCTION</scope>
</reference>
<reference key="8">
    <citation type="journal article" date="2010" name="J. Biol. Chem.">
        <title>Affinity purification of the Arabidopsis 26 S proteasome reveals a diverse array of plant proteolytic complexes.</title>
        <authorList>
            <person name="Book A.J."/>
            <person name="Gladman N.P."/>
            <person name="Lee S.S."/>
            <person name="Scalf M."/>
            <person name="Smith L.M."/>
            <person name="Vierstra R.D."/>
        </authorList>
    </citation>
    <scope>IDENTIFICATION BY MASS SPECTROMETRY</scope>
    <scope>CHARACTERIZATION OF THE 26S PROTEASOME COMPLEX</scope>
    <scope>SUBUNIT</scope>
</reference>
<comment type="function">
    <text evidence="7">The 26S proteasome is involved in the ATP-dependent degradation of ubiquitinated proteins. The regulatory (or ATPase) complex confers ATP dependency and substrate specificity to the 26S complex.</text>
</comment>
<comment type="subunit">
    <text evidence="6 8">Component of the 19S regulatory particle (RP/PA700) base subcomplex of the 26S proteasome. The 26S proteasome is composed of a core protease (CP), known as the 20S proteasome, capped at one or both ends by the 19S regulatory particle (RP/PA700). The RP/PA700 complex is composed of at least 17 different subunits in two subcomplexes, the base and the lid, which form the portions proximal and distal to the 20S proteolytic core, respectively.</text>
</comment>
<comment type="subcellular location">
    <subcellularLocation>
        <location evidence="1">Cytoplasm</location>
    </subcellularLocation>
    <subcellularLocation>
        <location evidence="1">Nucleus</location>
    </subcellularLocation>
</comment>
<comment type="similarity">
    <text evidence="9">Belongs to the AAA ATPase family.</text>
</comment>
<comment type="sequence caution" evidence="9">
    <conflict type="erroneous initiation">
        <sequence resource="EMBL-CDS" id="AAB70397"/>
    </conflict>
    <text>Truncated N-terminus.</text>
</comment>